<gene>
    <name evidence="4" type="primary">DVL19</name>
    <name evidence="5" type="synonym">RTFL10</name>
    <name evidence="7" type="ordered locus">At3g14362</name>
    <name evidence="8" type="ORF">MLN21</name>
</gene>
<sequence length="48" mass="5634">MAGLKRKFNKGHAFTSKCVSLVKEQRARLYILRRCATMLCCWYIHGDE</sequence>
<reference key="1">
    <citation type="journal article" date="2004" name="Plant J.">
        <title>DVL, a novel class of small polypeptides: overexpression alters Arabidopsis development.</title>
        <authorList>
            <person name="Wen J."/>
            <person name="Lease K.A."/>
            <person name="Walker J.C."/>
        </authorList>
    </citation>
    <scope>NUCLEOTIDE SEQUENCE [MRNA]</scope>
    <scope>GENE FAMILY</scope>
    <scope>NOMENCLATURE</scope>
    <source>
        <strain>cv. Columbia</strain>
    </source>
</reference>
<reference key="2">
    <citation type="journal article" date="2000" name="DNA Res.">
        <title>Structural analysis of Arabidopsis thaliana chromosome 3. I. Sequence features of the regions of 4,504,864 bp covered by sixty P1 and TAC clones.</title>
        <authorList>
            <person name="Sato S."/>
            <person name="Nakamura Y."/>
            <person name="Kaneko T."/>
            <person name="Katoh T."/>
            <person name="Asamizu E."/>
            <person name="Tabata S."/>
        </authorList>
    </citation>
    <scope>NUCLEOTIDE SEQUENCE [LARGE SCALE GENOMIC DNA]</scope>
    <source>
        <strain>cv. Columbia</strain>
    </source>
</reference>
<reference key="3">
    <citation type="journal article" date="2017" name="Plant J.">
        <title>Araport11: a complete reannotation of the Arabidopsis thaliana reference genome.</title>
        <authorList>
            <person name="Cheng C.Y."/>
            <person name="Krishnakumar V."/>
            <person name="Chan A.P."/>
            <person name="Thibaud-Nissen F."/>
            <person name="Schobel S."/>
            <person name="Town C.D."/>
        </authorList>
    </citation>
    <scope>GENOME REANNOTATION</scope>
    <source>
        <strain>cv. Columbia</strain>
    </source>
</reference>
<reference key="4">
    <citation type="submission" date="2006-07" db="EMBL/GenBank/DDBJ databases">
        <title>Large-scale analysis of RIKEN Arabidopsis full-length (RAFL) cDNAs.</title>
        <authorList>
            <person name="Totoki Y."/>
            <person name="Seki M."/>
            <person name="Ishida J."/>
            <person name="Nakajima M."/>
            <person name="Enju A."/>
            <person name="Kamiya A."/>
            <person name="Narusaka M."/>
            <person name="Shin-i T."/>
            <person name="Nakagawa M."/>
            <person name="Sakamoto N."/>
            <person name="Oishi K."/>
            <person name="Kohara Y."/>
            <person name="Kobayashi M."/>
            <person name="Toyoda A."/>
            <person name="Sakaki Y."/>
            <person name="Sakurai T."/>
            <person name="Iida K."/>
            <person name="Akiyama K."/>
            <person name="Satou M."/>
            <person name="Toyoda T."/>
            <person name="Konagaya A."/>
            <person name="Carninci P."/>
            <person name="Kawai J."/>
            <person name="Hayashizaki Y."/>
            <person name="Shinozaki K."/>
        </authorList>
    </citation>
    <scope>NUCLEOTIDE SEQUENCE [LARGE SCALE MRNA]</scope>
    <source>
        <strain>cv. Columbia</strain>
    </source>
</reference>
<reference key="5">
    <citation type="journal article" date="2004" name="Plant J.">
        <title>Overexpression of a novel small peptide ROTUNDIFOLIA4 decreases cell proliferation and alters leaf shape in Arabidopsis thaliana.</title>
        <authorList>
            <person name="Narita N.N."/>
            <person name="Moore S."/>
            <person name="Horiguchi G."/>
            <person name="Kubo M."/>
            <person name="Demura T."/>
            <person name="Fukuda H."/>
            <person name="Goodrich J."/>
            <person name="Tsukaya H."/>
        </authorList>
    </citation>
    <scope>GENE FAMILY</scope>
    <source>
        <strain>cv. Columbia</strain>
        <strain>cv. Landsberg erecta</strain>
    </source>
</reference>
<reference key="6">
    <citation type="journal article" date="2015" name="J. Plant Res.">
        <title>Comparative analysis of the RTFL peptide family on the control of plant organogenesis.</title>
        <authorList>
            <person name="Guo P."/>
            <person name="Yoshimura A."/>
            <person name="Ishikawa N."/>
            <person name="Yamaguchi T."/>
            <person name="Guo Y."/>
            <person name="Tsukaya H."/>
        </authorList>
    </citation>
    <scope>REVIEW</scope>
    <scope>GENE FAMILY</scope>
    <scope>NOMENCLATURE</scope>
    <source>
        <strain>cv. Columbia</strain>
    </source>
</reference>
<name>DVL19_ARATH</name>
<keyword id="KW-1003">Cell membrane</keyword>
<keyword id="KW-0217">Developmental protein</keyword>
<keyword id="KW-0472">Membrane</keyword>
<keyword id="KW-1185">Reference proteome</keyword>
<keyword id="KW-0812">Transmembrane</keyword>
<keyword id="KW-1133">Transmembrane helix</keyword>
<comment type="function">
    <text evidence="1">Small polypeptide acting as a regulatory molecule which coordinates cellular responses required for differentiation, growth and development, probably by restricting polar cell proliferation in lateral organs and coordinating socket cell recruitment and differentiation at trichome sites.</text>
</comment>
<comment type="subcellular location">
    <subcellularLocation>
        <location evidence="2">Cell membrane</location>
        <topology evidence="3">Single-pass membrane protein</topology>
    </subcellularLocation>
</comment>
<comment type="similarity">
    <text evidence="6">Belongs to the DVL/RTFL small polypeptides family.</text>
</comment>
<organism>
    <name type="scientific">Arabidopsis thaliana</name>
    <name type="common">Mouse-ear cress</name>
    <dbReference type="NCBI Taxonomy" id="3702"/>
    <lineage>
        <taxon>Eukaryota</taxon>
        <taxon>Viridiplantae</taxon>
        <taxon>Streptophyta</taxon>
        <taxon>Embryophyta</taxon>
        <taxon>Tracheophyta</taxon>
        <taxon>Spermatophyta</taxon>
        <taxon>Magnoliopsida</taxon>
        <taxon>eudicotyledons</taxon>
        <taxon>Gunneridae</taxon>
        <taxon>Pentapetalae</taxon>
        <taxon>rosids</taxon>
        <taxon>malvids</taxon>
        <taxon>Brassicales</taxon>
        <taxon>Brassicaceae</taxon>
        <taxon>Camelineae</taxon>
        <taxon>Arabidopsis</taxon>
    </lineage>
</organism>
<proteinExistence type="inferred from homology"/>
<dbReference type="EMBL" id="BK001762">
    <property type="protein sequence ID" value="DAA02290.1"/>
    <property type="molecule type" value="mRNA"/>
</dbReference>
<dbReference type="EMBL" id="AB022220">
    <property type="status" value="NOT_ANNOTATED_CDS"/>
    <property type="molecule type" value="Genomic_DNA"/>
</dbReference>
<dbReference type="EMBL" id="CP002686">
    <property type="protein sequence ID" value="AEE75508.1"/>
    <property type="molecule type" value="Genomic_DNA"/>
</dbReference>
<dbReference type="EMBL" id="AK229109">
    <property type="protein sequence ID" value="BAF00986.1"/>
    <property type="molecule type" value="mRNA"/>
</dbReference>
<dbReference type="RefSeq" id="NP_001078153.1">
    <property type="nucleotide sequence ID" value="NM_001084684.1"/>
</dbReference>
<dbReference type="STRING" id="3702.Q6IM82"/>
<dbReference type="PaxDb" id="3702-AT3G14362.1"/>
<dbReference type="EnsemblPlants" id="AT3G14362.1">
    <property type="protein sequence ID" value="AT3G14362.1"/>
    <property type="gene ID" value="AT3G14362"/>
</dbReference>
<dbReference type="GeneID" id="5008002"/>
<dbReference type="Gramene" id="AT3G14362.1">
    <property type="protein sequence ID" value="AT3G14362.1"/>
    <property type="gene ID" value="AT3G14362"/>
</dbReference>
<dbReference type="KEGG" id="ath:AT3G14362"/>
<dbReference type="Araport" id="AT3G14362"/>
<dbReference type="TAIR" id="AT3G14362">
    <property type="gene designation" value="RTFL10"/>
</dbReference>
<dbReference type="eggNOG" id="ENOG502S749">
    <property type="taxonomic scope" value="Eukaryota"/>
</dbReference>
<dbReference type="HOGENOM" id="CLU_150897_4_1_1"/>
<dbReference type="InParanoid" id="Q6IM82"/>
<dbReference type="PhylomeDB" id="Q6IM82"/>
<dbReference type="PRO" id="PR:Q6IM82"/>
<dbReference type="Proteomes" id="UP000006548">
    <property type="component" value="Chromosome 3"/>
</dbReference>
<dbReference type="ExpressionAtlas" id="Q6IM82">
    <property type="expression patterns" value="baseline and differential"/>
</dbReference>
<dbReference type="GO" id="GO:0005886">
    <property type="term" value="C:plasma membrane"/>
    <property type="evidence" value="ECO:0000250"/>
    <property type="project" value="UniProtKB"/>
</dbReference>
<dbReference type="GO" id="GO:0008285">
    <property type="term" value="P:negative regulation of cell population proliferation"/>
    <property type="evidence" value="ECO:0000250"/>
    <property type="project" value="UniProtKB"/>
</dbReference>
<dbReference type="GO" id="GO:0048367">
    <property type="term" value="P:shoot system development"/>
    <property type="evidence" value="ECO:0000250"/>
    <property type="project" value="TAIR"/>
</dbReference>
<dbReference type="InterPro" id="IPR012552">
    <property type="entry name" value="DVL"/>
</dbReference>
<dbReference type="InterPro" id="IPR051525">
    <property type="entry name" value="DVL_RTFL_regulatory"/>
</dbReference>
<dbReference type="PANTHER" id="PTHR33102">
    <property type="entry name" value="DVL19-RELATED-RELATED"/>
    <property type="match status" value="1"/>
</dbReference>
<dbReference type="Pfam" id="PF08137">
    <property type="entry name" value="DVL"/>
    <property type="match status" value="1"/>
</dbReference>
<protein>
    <recommendedName>
        <fullName evidence="4">Small polypeptide DEVIL 19</fullName>
    </recommendedName>
    <alternativeName>
        <fullName evidence="5">Small polypeptide ROTUNDIFOLIA LIKE 10</fullName>
        <shortName evidence="5">Small polypeptide ROT-FOUR-LIKE 10</shortName>
    </alternativeName>
</protein>
<feature type="chain" id="PRO_0000452787" description="Small polypeptide DEVIL 19">
    <location>
        <begin position="1"/>
        <end position="48"/>
    </location>
</feature>
<feature type="transmembrane region" description="Helical" evidence="3">
    <location>
        <begin position="25"/>
        <end position="42"/>
    </location>
</feature>
<feature type="region of interest" description="Required for DVL/RTFL small polypeptide activity" evidence="2">
    <location>
        <begin position="13"/>
        <end position="44"/>
    </location>
</feature>
<evidence type="ECO:0000250" key="1">
    <source>
        <dbReference type="UniProtKB" id="Q6X5V0"/>
    </source>
</evidence>
<evidence type="ECO:0000250" key="2">
    <source>
        <dbReference type="UniProtKB" id="Q7XXN8"/>
    </source>
</evidence>
<evidence type="ECO:0000255" key="3"/>
<evidence type="ECO:0000303" key="4">
    <source>
    </source>
</evidence>
<evidence type="ECO:0000303" key="5">
    <source>
    </source>
</evidence>
<evidence type="ECO:0000305" key="6"/>
<evidence type="ECO:0000312" key="7">
    <source>
        <dbReference type="Araport" id="AT3G14362"/>
    </source>
</evidence>
<evidence type="ECO:0000312" key="8">
    <source>
        <dbReference type="EMBL" id="AB022220"/>
    </source>
</evidence>
<accession>Q6IM82</accession>